<proteinExistence type="evidence at protein level"/>
<protein>
    <recommendedName>
        <fullName>60 kDa cell wall protein</fullName>
    </recommendedName>
</protein>
<feature type="chain" id="PRO_0000079641" description="60 kDa cell wall protein">
    <location>
        <begin position="1"/>
        <end position="9" status="greater than"/>
    </location>
</feature>
<feature type="non-terminal residue" evidence="2">
    <location>
        <position position="9"/>
    </location>
</feature>
<keyword id="KW-0134">Cell wall</keyword>
<keyword id="KW-0903">Direct protein sequencing</keyword>
<keyword id="KW-0964">Secreted</keyword>
<accession>P80765</accession>
<evidence type="ECO:0000269" key="1">
    <source>
    </source>
</evidence>
<evidence type="ECO:0000303" key="2">
    <source>
    </source>
</evidence>
<evidence type="ECO:0000305" key="3"/>
<reference evidence="3" key="1">
    <citation type="journal article" date="1997" name="J. Biol. Chem.">
        <title>Differential extraction and protein sequencing reveals major differences in patterns of primary cell wall proteins from plants.</title>
        <authorList>
            <person name="Robertson D."/>
            <person name="Mitchell G.P."/>
            <person name="Gilroy J.S."/>
            <person name="Gerrish C."/>
            <person name="Bolwell G.P."/>
            <person name="Slabas A.R."/>
        </authorList>
    </citation>
    <scope>PROTEIN SEQUENCE</scope>
    <scope>SUBCELLULAR LOCATION</scope>
</reference>
<dbReference type="GO" id="GO:0005576">
    <property type="term" value="C:extracellular region"/>
    <property type="evidence" value="ECO:0007669"/>
    <property type="project" value="UniProtKB-KW"/>
</dbReference>
<comment type="subcellular location">
    <subcellularLocation>
        <location evidence="1">Secreted</location>
        <location evidence="1">Cell wall</location>
    </subcellularLocation>
</comment>
<organism>
    <name type="scientific">Phaseolus vulgaris</name>
    <name type="common">Kidney bean</name>
    <name type="synonym">French bean</name>
    <dbReference type="NCBI Taxonomy" id="3885"/>
    <lineage>
        <taxon>Eukaryota</taxon>
        <taxon>Viridiplantae</taxon>
        <taxon>Streptophyta</taxon>
        <taxon>Embryophyta</taxon>
        <taxon>Tracheophyta</taxon>
        <taxon>Spermatophyta</taxon>
        <taxon>Magnoliopsida</taxon>
        <taxon>eudicotyledons</taxon>
        <taxon>Gunneridae</taxon>
        <taxon>Pentapetalae</taxon>
        <taxon>rosids</taxon>
        <taxon>fabids</taxon>
        <taxon>Fabales</taxon>
        <taxon>Fabaceae</taxon>
        <taxon>Papilionoideae</taxon>
        <taxon>50 kb inversion clade</taxon>
        <taxon>NPAAA clade</taxon>
        <taxon>indigoferoid/millettioid clade</taxon>
        <taxon>Phaseoleae</taxon>
        <taxon>Phaseolus</taxon>
    </lineage>
</organism>
<name>CWP06_PHAVU</name>
<sequence length="9" mass="1160">EDAYKFTTW</sequence>